<keyword id="KW-0010">Activator</keyword>
<keyword id="KW-0963">Cytoplasm</keyword>
<keyword id="KW-0678">Repressor</keyword>
<keyword id="KW-0694">RNA-binding</keyword>
<keyword id="KW-0810">Translation regulation</keyword>
<dbReference type="EMBL" id="CP000644">
    <property type="protein sequence ID" value="ABO91773.1"/>
    <property type="molecule type" value="Genomic_DNA"/>
</dbReference>
<dbReference type="RefSeq" id="WP_005315760.1">
    <property type="nucleotide sequence ID" value="NC_009348.1"/>
</dbReference>
<dbReference type="BMRB" id="A4SSA1"/>
<dbReference type="SMR" id="A4SSA1"/>
<dbReference type="STRING" id="29491.GCA_000820065_04192"/>
<dbReference type="GeneID" id="97859292"/>
<dbReference type="KEGG" id="asa:ASA_3813"/>
<dbReference type="eggNOG" id="COG1551">
    <property type="taxonomic scope" value="Bacteria"/>
</dbReference>
<dbReference type="HOGENOM" id="CLU_164837_2_1_6"/>
<dbReference type="Proteomes" id="UP000000225">
    <property type="component" value="Chromosome"/>
</dbReference>
<dbReference type="GO" id="GO:0005829">
    <property type="term" value="C:cytosol"/>
    <property type="evidence" value="ECO:0007669"/>
    <property type="project" value="TreeGrafter"/>
</dbReference>
<dbReference type="GO" id="GO:0048027">
    <property type="term" value="F:mRNA 5'-UTR binding"/>
    <property type="evidence" value="ECO:0007669"/>
    <property type="project" value="UniProtKB-UniRule"/>
</dbReference>
<dbReference type="GO" id="GO:0006402">
    <property type="term" value="P:mRNA catabolic process"/>
    <property type="evidence" value="ECO:0007669"/>
    <property type="project" value="InterPro"/>
</dbReference>
<dbReference type="GO" id="GO:0045947">
    <property type="term" value="P:negative regulation of translational initiation"/>
    <property type="evidence" value="ECO:0007669"/>
    <property type="project" value="UniProtKB-UniRule"/>
</dbReference>
<dbReference type="GO" id="GO:0045948">
    <property type="term" value="P:positive regulation of translational initiation"/>
    <property type="evidence" value="ECO:0007669"/>
    <property type="project" value="UniProtKB-UniRule"/>
</dbReference>
<dbReference type="GO" id="GO:0006109">
    <property type="term" value="P:regulation of carbohydrate metabolic process"/>
    <property type="evidence" value="ECO:0007669"/>
    <property type="project" value="UniProtKB-UniRule"/>
</dbReference>
<dbReference type="FunFam" id="2.60.40.4380:FF:000001">
    <property type="entry name" value="Translational regulator CsrA"/>
    <property type="match status" value="1"/>
</dbReference>
<dbReference type="Gene3D" id="2.60.40.4380">
    <property type="entry name" value="Translational regulator CsrA"/>
    <property type="match status" value="1"/>
</dbReference>
<dbReference type="HAMAP" id="MF_00167">
    <property type="entry name" value="CsrA"/>
    <property type="match status" value="1"/>
</dbReference>
<dbReference type="InterPro" id="IPR003751">
    <property type="entry name" value="CsrA"/>
</dbReference>
<dbReference type="InterPro" id="IPR036107">
    <property type="entry name" value="CsrA_sf"/>
</dbReference>
<dbReference type="NCBIfam" id="TIGR00202">
    <property type="entry name" value="csrA"/>
    <property type="match status" value="1"/>
</dbReference>
<dbReference type="NCBIfam" id="NF002469">
    <property type="entry name" value="PRK01712.1"/>
    <property type="match status" value="1"/>
</dbReference>
<dbReference type="PANTHER" id="PTHR34984">
    <property type="entry name" value="CARBON STORAGE REGULATOR"/>
    <property type="match status" value="1"/>
</dbReference>
<dbReference type="PANTHER" id="PTHR34984:SF1">
    <property type="entry name" value="CARBON STORAGE REGULATOR"/>
    <property type="match status" value="1"/>
</dbReference>
<dbReference type="Pfam" id="PF02599">
    <property type="entry name" value="CsrA"/>
    <property type="match status" value="1"/>
</dbReference>
<dbReference type="SUPFAM" id="SSF117130">
    <property type="entry name" value="CsrA-like"/>
    <property type="match status" value="1"/>
</dbReference>
<organism>
    <name type="scientific">Aeromonas salmonicida (strain A449)</name>
    <dbReference type="NCBI Taxonomy" id="382245"/>
    <lineage>
        <taxon>Bacteria</taxon>
        <taxon>Pseudomonadati</taxon>
        <taxon>Pseudomonadota</taxon>
        <taxon>Gammaproteobacteria</taxon>
        <taxon>Aeromonadales</taxon>
        <taxon>Aeromonadaceae</taxon>
        <taxon>Aeromonas</taxon>
    </lineage>
</organism>
<sequence>MLILTRRVGETLMIGDEVTVTVLGVKGNQVRIGVNAPKEVSVHREEIYMRIQAEKVPGQPNF</sequence>
<name>CSRA_AERS4</name>
<gene>
    <name evidence="1" type="primary">csrA</name>
    <name type="ordered locus">ASA_3813</name>
</gene>
<reference key="1">
    <citation type="journal article" date="2008" name="BMC Genomics">
        <title>The genome of Aeromonas salmonicida subsp. salmonicida A449: insights into the evolution of a fish pathogen.</title>
        <authorList>
            <person name="Reith M.E."/>
            <person name="Singh R.K."/>
            <person name="Curtis B."/>
            <person name="Boyd J.M."/>
            <person name="Bouevitch A."/>
            <person name="Kimball J."/>
            <person name="Munholland J."/>
            <person name="Murphy C."/>
            <person name="Sarty D."/>
            <person name="Williams J."/>
            <person name="Nash J.H."/>
            <person name="Johnson S.C."/>
            <person name="Brown L.L."/>
        </authorList>
    </citation>
    <scope>NUCLEOTIDE SEQUENCE [LARGE SCALE GENOMIC DNA]</scope>
    <source>
        <strain>A449</strain>
    </source>
</reference>
<accession>A4SSA1</accession>
<comment type="function">
    <text evidence="1">A key translational regulator that binds mRNA to regulate translation initiation and/or mRNA stability. Mediates global changes in gene expression, shifting from rapid growth to stress survival by linking envelope stress, the stringent response and the catabolite repression systems. Usually binds in the 5'-UTR; binding at or near the Shine-Dalgarno sequence prevents ribosome-binding, repressing translation, binding elsewhere in the 5'-UTR can activate translation and/or stabilize the mRNA. Its function is antagonized by small RNA(s).</text>
</comment>
<comment type="subunit">
    <text evidence="1">Homodimer; the beta-strands of each monomer intercalate to form a hydrophobic core, while the alpha-helices form wings that extend away from the core.</text>
</comment>
<comment type="subcellular location">
    <subcellularLocation>
        <location evidence="1">Cytoplasm</location>
    </subcellularLocation>
</comment>
<comment type="similarity">
    <text evidence="1">Belongs to the CsrA/RsmA family.</text>
</comment>
<evidence type="ECO:0000255" key="1">
    <source>
        <dbReference type="HAMAP-Rule" id="MF_00167"/>
    </source>
</evidence>
<feature type="chain" id="PRO_1000023357" description="Translational regulator CsrA">
    <location>
        <begin position="1"/>
        <end position="62"/>
    </location>
</feature>
<proteinExistence type="inferred from homology"/>
<protein>
    <recommendedName>
        <fullName evidence="1">Translational regulator CsrA</fullName>
    </recommendedName>
    <alternativeName>
        <fullName evidence="1">Carbon storage regulator</fullName>
    </alternativeName>
</protein>